<accession>P31224</accession>
<accession>Q2MBW5</accession>
<name>ACRB_ECOLI</name>
<keyword id="KW-0002">3D-structure</keyword>
<keyword id="KW-0997">Cell inner membrane</keyword>
<keyword id="KW-1003">Cell membrane</keyword>
<keyword id="KW-0472">Membrane</keyword>
<keyword id="KW-1185">Reference proteome</keyword>
<keyword id="KW-0812">Transmembrane</keyword>
<keyword id="KW-1133">Transmembrane helix</keyword>
<keyword id="KW-0813">Transport</keyword>
<feature type="chain" id="PRO_0000161811" description="Multidrug efflux pump subunit AcrB">
    <location>
        <begin position="1"/>
        <end position="1049"/>
    </location>
</feature>
<feature type="topological domain" description="Cytoplasmic" evidence="5">
    <location>
        <begin position="1"/>
        <end position="9"/>
    </location>
</feature>
<feature type="transmembrane region" description="Helical; Name=1">
    <location>
        <begin position="10"/>
        <end position="28"/>
    </location>
</feature>
<feature type="topological domain" description="Periplasmic" evidence="5">
    <location>
        <begin position="29"/>
        <end position="336"/>
    </location>
</feature>
<feature type="transmembrane region" description="Helical; Name=2">
    <location>
        <begin position="337"/>
        <end position="356"/>
    </location>
</feature>
<feature type="topological domain" description="Cytoplasmic" evidence="5">
    <location>
        <begin position="357"/>
        <end position="365"/>
    </location>
</feature>
<feature type="transmembrane region" description="Helical; Name=3">
    <location>
        <begin position="366"/>
        <end position="385"/>
    </location>
</feature>
<feature type="topological domain" description="Periplasmic" evidence="5">
    <location>
        <begin position="386"/>
        <end position="391"/>
    </location>
</feature>
<feature type="transmembrane region" description="Helical; Name=4">
    <location>
        <begin position="392"/>
        <end position="413"/>
    </location>
</feature>
<feature type="topological domain" description="Cytoplasmic" evidence="5">
    <location>
        <begin position="414"/>
        <end position="438"/>
    </location>
</feature>
<feature type="transmembrane region" description="Helical; Name=5">
    <location>
        <begin position="439"/>
        <end position="457"/>
    </location>
</feature>
<feature type="topological domain" description="Periplasmic" evidence="5">
    <location>
        <begin position="458"/>
        <end position="465"/>
    </location>
</feature>
<feature type="transmembrane region" description="Helical; Name=6">
    <location>
        <begin position="466"/>
        <end position="490"/>
    </location>
</feature>
<feature type="topological domain" description="Cytoplasmic" evidence="5">
    <location>
        <begin position="491"/>
        <end position="538"/>
    </location>
</feature>
<feature type="transmembrane region" description="Helical; Name=7">
    <location>
        <begin position="539"/>
        <end position="555"/>
    </location>
</feature>
<feature type="topological domain" description="Periplasmic" evidence="5">
    <location>
        <begin position="556"/>
        <end position="871"/>
    </location>
</feature>
<feature type="transmembrane region" description="Helical; Name=8">
    <location>
        <begin position="872"/>
        <end position="888"/>
    </location>
</feature>
<feature type="topological domain" description="Cytoplasmic" evidence="5">
    <location>
        <begin position="889"/>
        <end position="898"/>
    </location>
</feature>
<feature type="transmembrane region" description="Helical; Name=9">
    <location>
        <begin position="899"/>
        <end position="918"/>
    </location>
</feature>
<feature type="topological domain" description="Periplasmic" evidence="5">
    <location>
        <begin position="919"/>
        <end position="924"/>
    </location>
</feature>
<feature type="transmembrane region" description="Helical; Name=10">
    <location>
        <begin position="925"/>
        <end position="943"/>
    </location>
</feature>
<feature type="topological domain" description="Cytoplasmic" evidence="5">
    <location>
        <begin position="944"/>
        <end position="972"/>
    </location>
</feature>
<feature type="transmembrane region" description="Helical; Name=11">
    <location>
        <begin position="973"/>
        <end position="992"/>
    </location>
</feature>
<feature type="topological domain" description="Periplasmic" evidence="5">
    <location>
        <begin position="993"/>
        <end position="998"/>
    </location>
</feature>
<feature type="transmembrane region" description="Helical; Name=12">
    <location>
        <begin position="999"/>
        <end position="1018"/>
    </location>
</feature>
<feature type="topological domain" description="Cytoplasmic" evidence="5">
    <location>
        <begin position="1019"/>
        <end position="1049"/>
    </location>
</feature>
<feature type="mutagenesis site" description="Partially restores chloramphenicol resistance to an AcrZ G30R mutant." evidence="11">
    <original>H</original>
    <variation>Y</variation>
    <location>
        <position position="526"/>
    </location>
</feature>
<feature type="helix" evidence="23">
    <location>
        <begin position="2"/>
        <end position="6"/>
    </location>
</feature>
<feature type="helix" evidence="23">
    <location>
        <begin position="9"/>
        <end position="29"/>
    </location>
</feature>
<feature type="strand" evidence="17">
    <location>
        <begin position="32"/>
        <end position="35"/>
    </location>
</feature>
<feature type="strand" evidence="25">
    <location>
        <begin position="42"/>
        <end position="48"/>
    </location>
</feature>
<feature type="helix" evidence="25">
    <location>
        <begin position="54"/>
        <end position="60"/>
    </location>
</feature>
<feature type="helix" evidence="25">
    <location>
        <begin position="62"/>
        <end position="66"/>
    </location>
</feature>
<feature type="strand" evidence="25">
    <location>
        <begin position="75"/>
        <end position="83"/>
    </location>
</feature>
<feature type="strand" evidence="25">
    <location>
        <begin position="86"/>
        <end position="94"/>
    </location>
</feature>
<feature type="strand" evidence="16">
    <location>
        <begin position="95"/>
        <end position="97"/>
    </location>
</feature>
<feature type="helix" evidence="25">
    <location>
        <begin position="100"/>
        <end position="114"/>
    </location>
</feature>
<feature type="helix" evidence="25">
    <location>
        <begin position="115"/>
        <end position="117"/>
    </location>
</feature>
<feature type="helix" evidence="25">
    <location>
        <begin position="120"/>
        <end position="123"/>
    </location>
</feature>
<feature type="strand" evidence="25">
    <location>
        <begin position="128"/>
        <end position="130"/>
    </location>
</feature>
<feature type="strand" evidence="25">
    <location>
        <begin position="132"/>
        <end position="144"/>
    </location>
</feature>
<feature type="strand" evidence="21">
    <location>
        <begin position="145"/>
        <end position="147"/>
    </location>
</feature>
<feature type="helix" evidence="25">
    <location>
        <begin position="151"/>
        <end position="161"/>
    </location>
</feature>
<feature type="helix" evidence="25">
    <location>
        <begin position="163"/>
        <end position="168"/>
    </location>
</feature>
<feature type="turn" evidence="14">
    <location>
        <begin position="169"/>
        <end position="171"/>
    </location>
</feature>
<feature type="strand" evidence="25">
    <location>
        <begin position="172"/>
        <end position="179"/>
    </location>
</feature>
<feature type="strand" evidence="25">
    <location>
        <begin position="182"/>
        <end position="188"/>
    </location>
</feature>
<feature type="helix" evidence="25">
    <location>
        <begin position="190"/>
        <end position="195"/>
    </location>
</feature>
<feature type="helix" evidence="25">
    <location>
        <begin position="200"/>
        <end position="210"/>
    </location>
</feature>
<feature type="strand" evidence="25">
    <location>
        <begin position="215"/>
        <end position="220"/>
    </location>
</feature>
<feature type="strand" evidence="25">
    <location>
        <begin position="232"/>
        <end position="235"/>
    </location>
</feature>
<feature type="helix" evidence="25">
    <location>
        <begin position="243"/>
        <end position="247"/>
    </location>
</feature>
<feature type="strand" evidence="25">
    <location>
        <begin position="250"/>
        <end position="253"/>
    </location>
</feature>
<feature type="strand" evidence="31">
    <location>
        <begin position="255"/>
        <end position="257"/>
    </location>
</feature>
<feature type="strand" evidence="25">
    <location>
        <begin position="259"/>
        <end position="261"/>
    </location>
</feature>
<feature type="helix" evidence="25">
    <location>
        <begin position="262"/>
        <end position="264"/>
    </location>
</feature>
<feature type="strand" evidence="25">
    <location>
        <begin position="266"/>
        <end position="273"/>
    </location>
</feature>
<feature type="strand" evidence="25">
    <location>
        <begin position="278"/>
        <end position="281"/>
    </location>
</feature>
<feature type="strand" evidence="25">
    <location>
        <begin position="284"/>
        <end position="294"/>
    </location>
</feature>
<feature type="strand" evidence="15">
    <location>
        <begin position="295"/>
        <end position="298"/>
    </location>
</feature>
<feature type="helix" evidence="25">
    <location>
        <begin position="299"/>
        <end position="313"/>
    </location>
</feature>
<feature type="helix" evidence="25">
    <location>
        <begin position="314"/>
        <end position="316"/>
    </location>
</feature>
<feature type="strand" evidence="15">
    <location>
        <begin position="317"/>
        <end position="319"/>
    </location>
</feature>
<feature type="strand" evidence="25">
    <location>
        <begin position="321"/>
        <end position="328"/>
    </location>
</feature>
<feature type="helix" evidence="23">
    <location>
        <begin position="330"/>
        <end position="359"/>
    </location>
</feature>
<feature type="helix" evidence="23">
    <location>
        <begin position="362"/>
        <end position="385"/>
    </location>
</feature>
<feature type="helix" evidence="23">
    <location>
        <begin position="392"/>
        <end position="423"/>
    </location>
</feature>
<feature type="helix" evidence="23">
    <location>
        <begin position="427"/>
        <end position="453"/>
    </location>
</feature>
<feature type="helix" evidence="23">
    <location>
        <begin position="455"/>
        <end position="458"/>
    </location>
</feature>
<feature type="helix" evidence="23">
    <location>
        <begin position="461"/>
        <end position="496"/>
    </location>
</feature>
<feature type="turn" evidence="17">
    <location>
        <begin position="505"/>
        <end position="508"/>
    </location>
</feature>
<feature type="strand" evidence="28">
    <location>
        <begin position="509"/>
        <end position="511"/>
    </location>
</feature>
<feature type="helix" evidence="23">
    <location>
        <begin position="512"/>
        <end position="536"/>
    </location>
</feature>
<feature type="strand" evidence="20">
    <location>
        <begin position="537"/>
        <end position="539"/>
    </location>
</feature>
<feature type="helix" evidence="23">
    <location>
        <begin position="540"/>
        <end position="558"/>
    </location>
</feature>
<feature type="strand" evidence="16">
    <location>
        <begin position="561"/>
        <end position="564"/>
    </location>
</feature>
<feature type="strand" evidence="25">
    <location>
        <begin position="571"/>
        <end position="577"/>
    </location>
</feature>
<feature type="strand" evidence="29">
    <location>
        <begin position="579"/>
        <end position="581"/>
    </location>
</feature>
<feature type="helix" evidence="25">
    <location>
        <begin position="584"/>
        <end position="599"/>
    </location>
</feature>
<feature type="turn" evidence="25">
    <location>
        <begin position="600"/>
        <end position="605"/>
    </location>
</feature>
<feature type="strand" evidence="25">
    <location>
        <begin position="606"/>
        <end position="616"/>
    </location>
</feature>
<feature type="strand" evidence="25">
    <location>
        <begin position="619"/>
        <end position="631"/>
    </location>
</feature>
<feature type="helix" evidence="25">
    <location>
        <begin position="634"/>
        <end position="636"/>
    </location>
</feature>
<feature type="helix" evidence="25">
    <location>
        <begin position="640"/>
        <end position="642"/>
    </location>
</feature>
<feature type="helix" evidence="25">
    <location>
        <begin position="644"/>
        <end position="655"/>
    </location>
</feature>
<feature type="strand" evidence="30">
    <location>
        <begin position="658"/>
        <end position="660"/>
    </location>
</feature>
<feature type="strand" evidence="25">
    <location>
        <begin position="662"/>
        <end position="666"/>
    </location>
</feature>
<feature type="helix" evidence="23">
    <location>
        <begin position="672"/>
        <end position="674"/>
    </location>
</feature>
<feature type="helix" evidence="27">
    <location>
        <begin position="675"/>
        <end position="677"/>
    </location>
</feature>
<feature type="strand" evidence="25">
    <location>
        <begin position="679"/>
        <end position="686"/>
    </location>
</feature>
<feature type="helix" evidence="25">
    <location>
        <begin position="692"/>
        <end position="707"/>
    </location>
</feature>
<feature type="turn" evidence="25">
    <location>
        <begin position="710"/>
        <end position="712"/>
    </location>
</feature>
<feature type="strand" evidence="25">
    <location>
        <begin position="713"/>
        <end position="720"/>
    </location>
</feature>
<feature type="strand" evidence="25">
    <location>
        <begin position="724"/>
        <end position="731"/>
    </location>
</feature>
<feature type="helix" evidence="25">
    <location>
        <begin position="733"/>
        <end position="739"/>
    </location>
</feature>
<feature type="helix" evidence="25">
    <location>
        <begin position="743"/>
        <end position="755"/>
    </location>
</feature>
<feature type="strand" evidence="25">
    <location>
        <begin position="757"/>
        <end position="764"/>
    </location>
</feature>
<feature type="strand" evidence="25">
    <location>
        <begin position="767"/>
        <end position="775"/>
    </location>
</feature>
<feature type="helix" evidence="25">
    <location>
        <begin position="777"/>
        <end position="779"/>
    </location>
</feature>
<feature type="strand" evidence="25">
    <location>
        <begin position="780"/>
        <end position="782"/>
    </location>
</feature>
<feature type="helix" evidence="25">
    <location>
        <begin position="783"/>
        <end position="788"/>
    </location>
</feature>
<feature type="strand" evidence="25">
    <location>
        <begin position="790"/>
        <end position="792"/>
    </location>
</feature>
<feature type="strand" evidence="19">
    <location>
        <begin position="794"/>
        <end position="796"/>
    </location>
</feature>
<feature type="strand" evidence="25">
    <location>
        <begin position="798"/>
        <end position="800"/>
    </location>
</feature>
<feature type="helix" evidence="25">
    <location>
        <begin position="801"/>
        <end position="803"/>
    </location>
</feature>
<feature type="strand" evidence="25">
    <location>
        <begin position="804"/>
        <end position="812"/>
    </location>
</feature>
<feature type="strand" evidence="25">
    <location>
        <begin position="814"/>
        <end position="819"/>
    </location>
</feature>
<feature type="strand" evidence="25">
    <location>
        <begin position="822"/>
        <end position="831"/>
    </location>
</feature>
<feature type="strand" evidence="19">
    <location>
        <begin position="833"/>
        <end position="835"/>
    </location>
</feature>
<feature type="helix" evidence="25">
    <location>
        <begin position="837"/>
        <end position="848"/>
    </location>
</feature>
<feature type="strand" evidence="25">
    <location>
        <begin position="855"/>
        <end position="859"/>
    </location>
</feature>
<feature type="helix" evidence="25">
    <location>
        <begin position="861"/>
        <end position="863"/>
    </location>
</feature>
<feature type="strand" evidence="23">
    <location>
        <begin position="865"/>
        <end position="868"/>
    </location>
</feature>
<feature type="turn" evidence="13">
    <location>
        <begin position="869"/>
        <end position="871"/>
    </location>
</feature>
<feature type="helix" evidence="23">
    <location>
        <begin position="873"/>
        <end position="892"/>
    </location>
</feature>
<feature type="strand" evidence="26">
    <location>
        <begin position="894"/>
        <end position="897"/>
    </location>
</feature>
<feature type="helix" evidence="23">
    <location>
        <begin position="898"/>
        <end position="902"/>
    </location>
</feature>
<feature type="helix" evidence="23">
    <location>
        <begin position="905"/>
        <end position="919"/>
    </location>
</feature>
<feature type="helix" evidence="23">
    <location>
        <begin position="925"/>
        <end position="954"/>
    </location>
</feature>
<feature type="turn" evidence="22">
    <location>
        <begin position="955"/>
        <end position="957"/>
    </location>
</feature>
<feature type="helix" evidence="23">
    <location>
        <begin position="960"/>
        <end position="985"/>
    </location>
</feature>
<feature type="helix" evidence="23">
    <location>
        <begin position="987"/>
        <end position="990"/>
    </location>
</feature>
<feature type="strand" evidence="18">
    <location>
        <begin position="994"/>
        <end position="996"/>
    </location>
</feature>
<feature type="helix" evidence="23">
    <location>
        <begin position="997"/>
        <end position="1032"/>
    </location>
</feature>
<feature type="turn" evidence="24">
    <location>
        <begin position="1033"/>
        <end position="1035"/>
    </location>
</feature>
<feature type="strand" evidence="17">
    <location>
        <begin position="1036"/>
        <end position="1038"/>
    </location>
</feature>
<feature type="strand" evidence="18">
    <location>
        <begin position="1039"/>
        <end position="1041"/>
    </location>
</feature>
<comment type="function">
    <text evidence="7 8 9 11">AcrA-AcrB-AcrZ-TolC is a drug efflux protein complex with broad substrate specificity that uses the proton motive force to export substrates.</text>
</comment>
<comment type="function">
    <text evidence="10">(Microbial infection) Involved in contact-dependent growth inhibition (CDI), acts downstream of BamA, the receptor for CDI. Its role in CDI is independent of the AcrA-AcrB-TolC efflux pump complex.</text>
</comment>
<comment type="subunit">
    <text evidence="1 2 3 4 6 7 8 9 11">Homotrimer, with large domains that extend into the periplasm, interacts with AcrA and TolC. AcrA may be required to stably link this protein and TolC. Interacts with AcrZ. Part of the AcrA-AcrB-AcrZ-TolC efflux pump.</text>
</comment>
<comment type="interaction">
    <interactant intactId="EBI-551006">
        <id>P31224</id>
    </interactant>
    <interactant intactId="EBI-551006">
        <id>P31224</id>
        <label>acrB</label>
    </interactant>
    <organismsDiffer>false</organismsDiffer>
    <experiments>9</experiments>
</comment>
<comment type="interaction">
    <interactant intactId="EBI-551006">
        <id>P31224</id>
    </interactant>
    <interactant intactId="EBI-6313593">
        <id>P0AAW9</id>
        <label>acrZ</label>
    </interactant>
    <organismsDiffer>false</organismsDiffer>
    <experiments>7</experiments>
</comment>
<comment type="interaction">
    <interactant intactId="EBI-551006">
        <id>P31224</id>
    </interactant>
    <interactant intactId="EBI-1130723">
        <id>P0ADZ7</id>
        <label>yajC</label>
    </interactant>
    <organismsDiffer>false</organismsDiffer>
    <experiments>2</experiments>
</comment>
<comment type="subcellular location">
    <subcellularLocation>
        <location evidence="4 6">Cell inner membrane</location>
        <topology evidence="4 6">Multi-pass membrane protein</topology>
    </subcellularLocation>
</comment>
<comment type="induction">
    <text evidence="11">Positively regulated by MarA, Rob and SoxS transcriptional regulators (at protein level).</text>
</comment>
<comment type="disruption phenotype">
    <text evidence="10">Loss of susceptibility to contact-dependent growth inhibition (CDI); inhibiting cells still contact the target.</text>
</comment>
<comment type="similarity">
    <text evidence="12">Belongs to the resistance-nodulation-cell division (RND) (TC 2.A.6) family.</text>
</comment>
<sequence length="1049" mass="113574">MPNFFIDRPIFAWVIAIIIMLAGGLAILKLPVAQYPTIAPPAVTISASYPGADAKTVQDTVTQVIEQNMNGIDNLMYMSSNSDSTGTVQITLTFESGTDADIAQVQVQNKLQLAMPLLPQEVQQQGVSVEKSSSSFLMVVGVINTDGTMTQEDISDYVAANMKDAISRTSGVGDVQLFGSQYAMRIWMNPNELNKFQLTPVDVITAIKAQNAQVAAGQLGGTPPVKGQQLNASIIAQTRLTSTEEFGKILLKVNQDGSRVLLRDVAKIELGGENYDIIAEFNGQPASGLGIKLATGANALDTAAAIRAELAKMEPFFPSGLKIVYPYDTTPFVKISIHEVVKTLVEAIILVFLVMYLFLQNFRATLIPTIAVPVVLLGTFAVLAAFGFSINTLTMFGMVLAIGLLVDDAIVVVENVERVMAEEGLPPKEATRKSMGQIQGALVGIAMVLSAVFVPMAFFGGSTGAIYRQFSITIVSAMALSVLVALILTPALCATMLKPIAKGDHGEGKKGFFGWFNRMFEKSTHHYTDSVGGILRSTGRYLVLYLIIVVGMAYLFVRLPSSFLPDEDQGVFMTMVQLPAGATQERTQKVLNEVTHYYLTKEKNNVESVFAVNGFGFAGRGQNTGIAFVSLKDWADRPGEENKVEAITMRATRAFSQIKDAMVFAFNLPAIVELGTATGFDFELIDQAGLGHEKLTQARNQLLAEAAKHPDMLTSVRPNGLEDTPQFKIDIDQEKAQALGVSINDINTTLGAAWGGSYVNDFIDRGRVKKVYVMSEAKYRMLPDDIGDWYVRAADGQMVPFSAFSSSRWEYGSPRLERYNGLPSMEILGQAAPGKSTGEAMELMEQLASKLPTGVGYDWTGMSYQERLSGNQAPSLYAISLIVVFLCLAALYESWSIPFSVMLVVPLGVIGALLAATFRGLTNDVYFQVGLLTTIGLSAKNAILIVEFAKDLMDKEGKGLIEATLDAVRMRLRPILMTSLAFILGVMPLVISTGAGSGAQNAVGTGVMGGMVTATVLAIFFVPVFFVVVRRRFSRKNEDIEHSHTVDHH</sequence>
<protein>
    <recommendedName>
        <fullName>Multidrug efflux pump subunit AcrB</fullName>
    </recommendedName>
    <alternativeName>
        <fullName>AcrAB-TolC multidrug efflux pump subunit AcrB</fullName>
    </alternativeName>
    <alternativeName>
        <fullName>Acridine resistance protein B</fullName>
    </alternativeName>
</protein>
<evidence type="ECO:0000269" key="1">
    <source>
    </source>
</evidence>
<evidence type="ECO:0000269" key="2">
    <source>
    </source>
</evidence>
<evidence type="ECO:0000269" key="3">
    <source>
    </source>
</evidence>
<evidence type="ECO:0000269" key="4">
    <source>
    </source>
</evidence>
<evidence type="ECO:0000269" key="5">
    <source>
    </source>
</evidence>
<evidence type="ECO:0000269" key="6">
    <source>
    </source>
</evidence>
<evidence type="ECO:0000269" key="7">
    <source>
    </source>
</evidence>
<evidence type="ECO:0000269" key="8">
    <source>
    </source>
</evidence>
<evidence type="ECO:0000269" key="9">
    <source>
    </source>
</evidence>
<evidence type="ECO:0000269" key="10">
    <source>
    </source>
</evidence>
<evidence type="ECO:0000269" key="11">
    <source>
    </source>
</evidence>
<evidence type="ECO:0000305" key="12"/>
<evidence type="ECO:0007829" key="13">
    <source>
        <dbReference type="PDB" id="1T9W"/>
    </source>
</evidence>
<evidence type="ECO:0007829" key="14">
    <source>
        <dbReference type="PDB" id="1T9X"/>
    </source>
</evidence>
<evidence type="ECO:0007829" key="15">
    <source>
        <dbReference type="PDB" id="2DHH"/>
    </source>
</evidence>
<evidence type="ECO:0007829" key="16">
    <source>
        <dbReference type="PDB" id="2DR6"/>
    </source>
</evidence>
<evidence type="ECO:0007829" key="17">
    <source>
        <dbReference type="PDB" id="2GIF"/>
    </source>
</evidence>
<evidence type="ECO:0007829" key="18">
    <source>
        <dbReference type="PDB" id="2J8S"/>
    </source>
</evidence>
<evidence type="ECO:0007829" key="19">
    <source>
        <dbReference type="PDB" id="3NOC"/>
    </source>
</evidence>
<evidence type="ECO:0007829" key="20">
    <source>
        <dbReference type="PDB" id="3NOG"/>
    </source>
</evidence>
<evidence type="ECO:0007829" key="21">
    <source>
        <dbReference type="PDB" id="3W9H"/>
    </source>
</evidence>
<evidence type="ECO:0007829" key="22">
    <source>
        <dbReference type="PDB" id="4C48"/>
    </source>
</evidence>
<evidence type="ECO:0007829" key="23">
    <source>
        <dbReference type="PDB" id="4DX5"/>
    </source>
</evidence>
<evidence type="ECO:0007829" key="24">
    <source>
        <dbReference type="PDB" id="4K7Q"/>
    </source>
</evidence>
<evidence type="ECO:0007829" key="25">
    <source>
        <dbReference type="PDB" id="5ENQ"/>
    </source>
</evidence>
<evidence type="ECO:0007829" key="26">
    <source>
        <dbReference type="PDB" id="5YIL"/>
    </source>
</evidence>
<evidence type="ECO:0007829" key="27">
    <source>
        <dbReference type="PDB" id="6BAJ"/>
    </source>
</evidence>
<evidence type="ECO:0007829" key="28">
    <source>
        <dbReference type="PDB" id="6Q4P"/>
    </source>
</evidence>
<evidence type="ECO:0007829" key="29">
    <source>
        <dbReference type="PDB" id="6SGR"/>
    </source>
</evidence>
<evidence type="ECO:0007829" key="30">
    <source>
        <dbReference type="PDB" id="6ZO6"/>
    </source>
</evidence>
<evidence type="ECO:0007829" key="31">
    <source>
        <dbReference type="PDB" id="7OUM"/>
    </source>
</evidence>
<reference key="1">
    <citation type="submission" date="1993-05" db="EMBL/GenBank/DDBJ databases">
        <title>Nucleotide sequence of the acrAB operon from Escherichia coli.</title>
        <authorList>
            <person name="Xu J."/>
            <person name="Bertrand K.P."/>
        </authorList>
    </citation>
    <scope>NUCLEOTIDE SEQUENCE [GENOMIC DNA]</scope>
    <source>
        <strain>K12</strain>
    </source>
</reference>
<reference key="2">
    <citation type="journal article" date="1993" name="J. Bacteriol.">
        <title>Molecular cloning and characterization of acrA and acrE genes of Escherichia coli.</title>
        <authorList>
            <person name="Ma D."/>
            <person name="Cook D.N."/>
            <person name="Alberti M."/>
            <person name="Pon N.G."/>
            <person name="Nikaido H."/>
            <person name="Hearst J.E."/>
        </authorList>
    </citation>
    <scope>NUCLEOTIDE SEQUENCE [GENOMIC DNA]</scope>
    <source>
        <strain>K12 / W4573</strain>
    </source>
</reference>
<reference key="3">
    <citation type="submission" date="1997-01" db="EMBL/GenBank/DDBJ databases">
        <title>Sequence of minutes 4-25 of Escherichia coli.</title>
        <authorList>
            <person name="Chung E."/>
            <person name="Allen E."/>
            <person name="Araujo R."/>
            <person name="Aparicio A.M."/>
            <person name="Davis K."/>
            <person name="Duncan M."/>
            <person name="Federspiel N."/>
            <person name="Hyman R."/>
            <person name="Kalman S."/>
            <person name="Komp C."/>
            <person name="Kurdi O."/>
            <person name="Lew H."/>
            <person name="Lin D."/>
            <person name="Namath A."/>
            <person name="Oefner P."/>
            <person name="Roberts D."/>
            <person name="Schramm S."/>
            <person name="Davis R.W."/>
        </authorList>
    </citation>
    <scope>NUCLEOTIDE SEQUENCE [LARGE SCALE GENOMIC DNA]</scope>
    <source>
        <strain>K12 / MG1655 / ATCC 47076</strain>
    </source>
</reference>
<reference key="4">
    <citation type="journal article" date="1997" name="Science">
        <title>The complete genome sequence of Escherichia coli K-12.</title>
        <authorList>
            <person name="Blattner F.R."/>
            <person name="Plunkett G. III"/>
            <person name="Bloch C.A."/>
            <person name="Perna N.T."/>
            <person name="Burland V."/>
            <person name="Riley M."/>
            <person name="Collado-Vides J."/>
            <person name="Glasner J.D."/>
            <person name="Rode C.K."/>
            <person name="Mayhew G.F."/>
            <person name="Gregor J."/>
            <person name="Davis N.W."/>
            <person name="Kirkpatrick H.A."/>
            <person name="Goeden M.A."/>
            <person name="Rose D.J."/>
            <person name="Mau B."/>
            <person name="Shao Y."/>
        </authorList>
    </citation>
    <scope>NUCLEOTIDE SEQUENCE [LARGE SCALE GENOMIC DNA]</scope>
    <source>
        <strain>K12 / MG1655 / ATCC 47076</strain>
    </source>
</reference>
<reference key="5">
    <citation type="journal article" date="2006" name="Mol. Syst. Biol.">
        <title>Highly accurate genome sequences of Escherichia coli K-12 strains MG1655 and W3110.</title>
        <authorList>
            <person name="Hayashi K."/>
            <person name="Morooka N."/>
            <person name="Yamamoto Y."/>
            <person name="Fujita K."/>
            <person name="Isono K."/>
            <person name="Choi S."/>
            <person name="Ohtsubo E."/>
            <person name="Baba T."/>
            <person name="Wanner B.L."/>
            <person name="Mori H."/>
            <person name="Horiuchi T."/>
        </authorList>
    </citation>
    <scope>NUCLEOTIDE SEQUENCE [LARGE SCALE GENOMIC DNA]</scope>
    <source>
        <strain>K12 / W3110 / ATCC 27325 / DSM 5911</strain>
    </source>
</reference>
<reference key="6">
    <citation type="journal article" date="1995" name="Mol. Microbiol.">
        <title>Genes acrA and acrB encode a stress-induced efflux system of Escherichia coli.</title>
        <authorList>
            <person name="Ma D."/>
            <person name="Cook D.N."/>
            <person name="Alberti M."/>
            <person name="Pon N.G."/>
            <person name="Nikaido H."/>
            <person name="Hearst J.E."/>
        </authorList>
    </citation>
    <scope>CHARACTERIZATION</scope>
</reference>
<reference key="7">
    <citation type="journal article" date="2000" name="J. Biochem.">
        <title>Molecular construction of a multidrug exporter system, AcrAB: molecular interaction between AcrA and AcrB, and cleavage of the N-terminal signal sequence of AcrA.</title>
        <authorList>
            <person name="Kawabe T."/>
            <person name="Fujihira E."/>
            <person name="Yamaguchi A."/>
        </authorList>
    </citation>
    <scope>INTERACTION WITH ACRA</scope>
</reference>
<reference key="8">
    <citation type="journal article" date="2004" name="Mol. Microbiol.">
        <title>Interactions underlying assembly of the Escherichia coli AcrAB-TolC multidrug efflux system.</title>
        <authorList>
            <person name="Touze T."/>
            <person name="Eswaran J."/>
            <person name="Bokma E."/>
            <person name="Koronakis E."/>
            <person name="Hughes C."/>
            <person name="Koronakis V."/>
        </authorList>
    </citation>
    <scope>INTERACTION WITH ACRA AND TOLC</scope>
    <scope>SUBUNIT</scope>
    <scope>SUBCELLULAR LOCATION</scope>
    <source>
        <strain>K12 / MC1061 / ATCC 53338 / DSM 7140</strain>
    </source>
</reference>
<reference key="9">
    <citation type="journal article" date="2005" name="J. Biol. Chem.">
        <title>Protein complexes of the Escherichia coli cell envelope.</title>
        <authorList>
            <person name="Stenberg F."/>
            <person name="Chovanec P."/>
            <person name="Maslen S.L."/>
            <person name="Robinson C.V."/>
            <person name="Ilag L."/>
            <person name="von Heijne G."/>
            <person name="Daley D.O."/>
        </authorList>
    </citation>
    <scope>SUBUNIT</scope>
    <scope>SUBCELLULAR LOCATION</scope>
    <source>
        <strain>BL21-DE3</strain>
    </source>
</reference>
<reference key="10">
    <citation type="journal article" date="2005" name="Science">
        <title>Global topology analysis of the Escherichia coli inner membrane proteome.</title>
        <authorList>
            <person name="Daley D.O."/>
            <person name="Rapp M."/>
            <person name="Granseth E."/>
            <person name="Melen K."/>
            <person name="Drew D."/>
            <person name="von Heijne G."/>
        </authorList>
    </citation>
    <scope>TOPOLOGY [LARGE SCALE ANALYSIS]</scope>
    <source>
        <strain>K12 / MG1655 / ATCC 47076</strain>
    </source>
</reference>
<reference key="11">
    <citation type="journal article" date="2008" name="Mol. Microbiol.">
        <title>Contact-dependent growth inhibition requires the essential outer membrane protein BamA (YaeT) as the receptor and the inner membrane transport protein AcrB.</title>
        <authorList>
            <person name="Aoki S.K."/>
            <person name="Malinverni J.C."/>
            <person name="Jacoby K."/>
            <person name="Thomas B."/>
            <person name="Pamma R."/>
            <person name="Trinh B.N."/>
            <person name="Remers S."/>
            <person name="Webb J."/>
            <person name="Braaten B.A."/>
            <person name="Silhavy T.J."/>
            <person name="Low D.A."/>
        </authorList>
    </citation>
    <scope>FUNCTION (MICROBIAL INFECTION)</scope>
    <scope>DISRUPTION PHENOTYPE</scope>
    <source>
        <strain>K12 / MC4100</strain>
    </source>
</reference>
<reference key="12">
    <citation type="journal article" date="2012" name="Proc. Natl. Acad. Sci. U.S.A.">
        <title>Conserved small protein associates with the multidrug efflux pump AcrB and differentially affects antibiotic resistance.</title>
        <authorList>
            <person name="Hobbs E.C."/>
            <person name="Yin X."/>
            <person name="Paul B.J."/>
            <person name="Astarita J.L."/>
            <person name="Storz G."/>
        </authorList>
    </citation>
    <scope>FUNCTION</scope>
    <scope>INTERACTION WITH ACRZ</scope>
    <scope>SUBUNIT</scope>
    <scope>INDUCTION</scope>
    <scope>MUTAGENESIS OF HIS-526</scope>
    <source>
        <strain>K12 / MG1655 / ATCC 47076</strain>
    </source>
</reference>
<reference key="13">
    <citation type="journal article" date="2002" name="Nature">
        <title>Crystal structure of bacterial multidrug efflux transporter AcrB.</title>
        <authorList>
            <person name="Murakami S."/>
            <person name="Nakashima R."/>
            <person name="Yamashita E."/>
            <person name="Yamaguchi A."/>
        </authorList>
    </citation>
    <scope>X-RAY CRYSTALLOGRAPHY (3.5 ANGSTROMS)</scope>
    <scope>SUBUNIT</scope>
</reference>
<reference key="14">
    <citation type="journal article" date="2003" name="Science">
        <title>Structural basis of multiple drug-binding capacity of the AcrB multidrug efflux pump.</title>
        <authorList>
            <person name="Yu E.W."/>
            <person name="McDermott G."/>
            <person name="Zgurskaya H.I."/>
            <person name="Nikaido H."/>
            <person name="Koshland D.E. Jr."/>
        </authorList>
    </citation>
    <scope>X-RAY CRYSTALLOGRAPHY (3.48 ANGSTROMS) IN COMPLEXES WITH SUBSTRATES</scope>
    <scope>SUBUNIT</scope>
</reference>
<reference key="15">
    <citation type="journal article" date="2006" name="Nature">
        <title>Crystal structures of a multidrug transporter reveal a functionally rotating mechanism.</title>
        <authorList>
            <person name="Murakami S."/>
            <person name="Nakashima R."/>
            <person name="Yamashita E."/>
            <person name="Matsumoto T."/>
            <person name="Yamaguchi A."/>
        </authorList>
    </citation>
    <scope>X-RAY CRYSTALLOGRAPHY (2.8 ANGSTROMS) IN COMPLEX WITH SUBSTRATE</scope>
    <scope>SUBUNIT</scope>
    <scope>FUNCTION</scope>
</reference>
<reference key="16">
    <citation type="journal article" date="2006" name="Science">
        <title>Structural asymmetry of AcrB trimer suggests a peristaltic pump mechanism.</title>
        <authorList>
            <person name="Seeger M.A."/>
            <person name="Schiefner A."/>
            <person name="Eicher T."/>
            <person name="Verrey F."/>
            <person name="Diederichs K."/>
            <person name="Pos K.M."/>
        </authorList>
    </citation>
    <scope>X-RAY CRYSTALLOGRAPHY (2.5 ANGSTROMS)</scope>
    <scope>SUBUNIT</scope>
    <scope>FUNCTION</scope>
</reference>
<reference key="17">
    <citation type="journal article" date="2007" name="PLoS Biol.">
        <title>Drug export pathway of multidrug exporter AcrB revealed by DARPin inhibitors.</title>
        <authorList>
            <person name="Sennhauser G."/>
            <person name="Amstutz P."/>
            <person name="Briand C."/>
            <person name="Storchenegger O."/>
            <person name="Gruetter M.G."/>
        </authorList>
    </citation>
    <scope>X-RAY CRYSTALLOGRAPHY (2.9 ANGSTROMS)</scope>
    <scope>FUNCTION</scope>
    <scope>SUBUNIT</scope>
</reference>
<dbReference type="EMBL" id="M94248">
    <property type="protein sequence ID" value="AAA23411.1"/>
    <property type="molecule type" value="Genomic_DNA"/>
</dbReference>
<dbReference type="EMBL" id="U00734">
    <property type="protein sequence ID" value="AAA67135.1"/>
    <property type="molecule type" value="Genomic_DNA"/>
</dbReference>
<dbReference type="EMBL" id="U82664">
    <property type="protein sequence ID" value="AAB40216.1"/>
    <property type="molecule type" value="Genomic_DNA"/>
</dbReference>
<dbReference type="EMBL" id="U00096">
    <property type="protein sequence ID" value="AAC73564.1"/>
    <property type="molecule type" value="Genomic_DNA"/>
</dbReference>
<dbReference type="EMBL" id="AP009048">
    <property type="protein sequence ID" value="BAE76241.1"/>
    <property type="molecule type" value="Genomic_DNA"/>
</dbReference>
<dbReference type="PIR" id="B36938">
    <property type="entry name" value="B36938"/>
</dbReference>
<dbReference type="RefSeq" id="NP_414995.1">
    <property type="nucleotide sequence ID" value="NC_000913.3"/>
</dbReference>
<dbReference type="RefSeq" id="WP_001132469.1">
    <property type="nucleotide sequence ID" value="NZ_STEB01000007.1"/>
</dbReference>
<dbReference type="PDB" id="1IWG">
    <property type="method" value="X-ray"/>
    <property type="resolution" value="3.50 A"/>
    <property type="chains" value="A=1-1049"/>
</dbReference>
<dbReference type="PDB" id="1OY6">
    <property type="method" value="X-ray"/>
    <property type="resolution" value="3.68 A"/>
    <property type="chains" value="A=1-1049"/>
</dbReference>
<dbReference type="PDB" id="1OY8">
    <property type="method" value="X-ray"/>
    <property type="resolution" value="3.63 A"/>
    <property type="chains" value="A=1-1049"/>
</dbReference>
<dbReference type="PDB" id="1OY9">
    <property type="method" value="X-ray"/>
    <property type="resolution" value="3.80 A"/>
    <property type="chains" value="A=1-1049"/>
</dbReference>
<dbReference type="PDB" id="1OYD">
    <property type="method" value="X-ray"/>
    <property type="resolution" value="3.80 A"/>
    <property type="chains" value="A=1-1049"/>
</dbReference>
<dbReference type="PDB" id="1OYE">
    <property type="method" value="X-ray"/>
    <property type="resolution" value="3.48 A"/>
    <property type="chains" value="A=1-1049"/>
</dbReference>
<dbReference type="PDB" id="1T9T">
    <property type="method" value="X-ray"/>
    <property type="resolution" value="3.23 A"/>
    <property type="chains" value="A=1-1049"/>
</dbReference>
<dbReference type="PDB" id="1T9U">
    <property type="method" value="X-ray"/>
    <property type="resolution" value="3.11 A"/>
    <property type="chains" value="A=1-1049"/>
</dbReference>
<dbReference type="PDB" id="1T9V">
    <property type="method" value="X-ray"/>
    <property type="resolution" value="3.80 A"/>
    <property type="chains" value="A=1-1049"/>
</dbReference>
<dbReference type="PDB" id="1T9W">
    <property type="method" value="X-ray"/>
    <property type="resolution" value="3.23 A"/>
    <property type="chains" value="A=1-1049"/>
</dbReference>
<dbReference type="PDB" id="1T9X">
    <property type="method" value="X-ray"/>
    <property type="resolution" value="3.08 A"/>
    <property type="chains" value="A=1-1049"/>
</dbReference>
<dbReference type="PDB" id="1T9Y">
    <property type="method" value="X-ray"/>
    <property type="resolution" value="3.64 A"/>
    <property type="chains" value="A=1-1049"/>
</dbReference>
<dbReference type="PDB" id="2DHH">
    <property type="method" value="X-ray"/>
    <property type="resolution" value="2.80 A"/>
    <property type="chains" value="A/B/C=1-1049"/>
</dbReference>
<dbReference type="PDB" id="2DR6">
    <property type="method" value="X-ray"/>
    <property type="resolution" value="3.30 A"/>
    <property type="chains" value="A/B/C=1-1049"/>
</dbReference>
<dbReference type="PDB" id="2DRD">
    <property type="method" value="X-ray"/>
    <property type="resolution" value="3.10 A"/>
    <property type="chains" value="A/B/C=1-1049"/>
</dbReference>
<dbReference type="PDB" id="2GIF">
    <property type="method" value="X-ray"/>
    <property type="resolution" value="2.90 A"/>
    <property type="chains" value="A/B/C=1-1049"/>
</dbReference>
<dbReference type="PDB" id="2HQC">
    <property type="method" value="X-ray"/>
    <property type="resolution" value="3.56 A"/>
    <property type="chains" value="A=1-1049"/>
</dbReference>
<dbReference type="PDB" id="2HQD">
    <property type="method" value="X-ray"/>
    <property type="resolution" value="3.65 A"/>
    <property type="chains" value="A=1-1049"/>
</dbReference>
<dbReference type="PDB" id="2HQF">
    <property type="method" value="X-ray"/>
    <property type="resolution" value="3.38 A"/>
    <property type="chains" value="A=1-1049"/>
</dbReference>
<dbReference type="PDB" id="2HQG">
    <property type="method" value="X-ray"/>
    <property type="resolution" value="3.38 A"/>
    <property type="chains" value="A=1-1049"/>
</dbReference>
<dbReference type="PDB" id="2HRT">
    <property type="method" value="X-ray"/>
    <property type="resolution" value="3.00 A"/>
    <property type="chains" value="A/B/C/D/E/F=1-1049"/>
</dbReference>
<dbReference type="PDB" id="2I6W">
    <property type="method" value="X-ray"/>
    <property type="resolution" value="3.10 A"/>
    <property type="chains" value="A=1-1049"/>
</dbReference>
<dbReference type="PDB" id="2J8S">
    <property type="method" value="X-ray"/>
    <property type="resolution" value="2.54 A"/>
    <property type="chains" value="A/B/C=1-1049"/>
</dbReference>
<dbReference type="PDB" id="2RDD">
    <property type="method" value="X-ray"/>
    <property type="resolution" value="3.50 A"/>
    <property type="chains" value="A=1-1049"/>
</dbReference>
<dbReference type="PDB" id="2W1B">
    <property type="method" value="X-ray"/>
    <property type="resolution" value="3.85 A"/>
    <property type="chains" value="A=1-1049"/>
</dbReference>
<dbReference type="PDB" id="3AOA">
    <property type="method" value="X-ray"/>
    <property type="resolution" value="3.35 A"/>
    <property type="chains" value="A/B/C=1-1049"/>
</dbReference>
<dbReference type="PDB" id="3AOB">
    <property type="method" value="X-ray"/>
    <property type="resolution" value="3.35 A"/>
    <property type="chains" value="A/B/C=1-1049"/>
</dbReference>
<dbReference type="PDB" id="3AOC">
    <property type="method" value="X-ray"/>
    <property type="resolution" value="3.34 A"/>
    <property type="chains" value="A/B/C=1-1049"/>
</dbReference>
<dbReference type="PDB" id="3AOD">
    <property type="method" value="X-ray"/>
    <property type="resolution" value="3.30 A"/>
    <property type="chains" value="A/B/C=1-1049"/>
</dbReference>
<dbReference type="PDB" id="3D9B">
    <property type="method" value="X-ray"/>
    <property type="resolution" value="3.42 A"/>
    <property type="chains" value="A=1-1049"/>
</dbReference>
<dbReference type="PDB" id="3NOC">
    <property type="method" value="X-ray"/>
    <property type="resolution" value="2.70 A"/>
    <property type="chains" value="A/B/C=1-1049"/>
</dbReference>
<dbReference type="PDB" id="3NOG">
    <property type="method" value="X-ray"/>
    <property type="resolution" value="3.34 A"/>
    <property type="chains" value="A/B/C=1-1049"/>
</dbReference>
<dbReference type="PDB" id="3W9H">
    <property type="method" value="X-ray"/>
    <property type="resolution" value="3.05 A"/>
    <property type="chains" value="A/B/C=1-1033"/>
</dbReference>
<dbReference type="PDB" id="4C48">
    <property type="method" value="X-ray"/>
    <property type="resolution" value="3.30 A"/>
    <property type="chains" value="A=1-1047"/>
</dbReference>
<dbReference type="PDB" id="4CDI">
    <property type="method" value="X-ray"/>
    <property type="resolution" value="3.70 A"/>
    <property type="chains" value="A=1-1049"/>
</dbReference>
<dbReference type="PDB" id="4DX5">
    <property type="method" value="X-ray"/>
    <property type="resolution" value="1.90 A"/>
    <property type="chains" value="A/B/C=1-1049"/>
</dbReference>
<dbReference type="PDB" id="4DX6">
    <property type="method" value="X-ray"/>
    <property type="resolution" value="2.90 A"/>
    <property type="chains" value="A/B/C=1-1049"/>
</dbReference>
<dbReference type="PDB" id="4DX7">
    <property type="method" value="X-ray"/>
    <property type="resolution" value="2.25 A"/>
    <property type="chains" value="A/B/C=1-1049"/>
</dbReference>
<dbReference type="PDB" id="4K7Q">
    <property type="method" value="X-ray"/>
    <property type="resolution" value="3.50 A"/>
    <property type="chains" value="A=1-1049"/>
</dbReference>
<dbReference type="PDB" id="4U8V">
    <property type="method" value="X-ray"/>
    <property type="resolution" value="2.30 A"/>
    <property type="chains" value="A/B/C=1-1049"/>
</dbReference>
<dbReference type="PDB" id="4U8Y">
    <property type="method" value="X-ray"/>
    <property type="resolution" value="2.10 A"/>
    <property type="chains" value="A/B/C=1-1049"/>
</dbReference>
<dbReference type="PDB" id="4U95">
    <property type="method" value="X-ray"/>
    <property type="resolution" value="2.00 A"/>
    <property type="chains" value="A/B/C=1-1049"/>
</dbReference>
<dbReference type="PDB" id="4U96">
    <property type="method" value="X-ray"/>
    <property type="resolution" value="2.20 A"/>
    <property type="chains" value="A/B/C=1-1049"/>
</dbReference>
<dbReference type="PDB" id="4ZIT">
    <property type="method" value="X-ray"/>
    <property type="resolution" value="3.30 A"/>
    <property type="chains" value="A/B/C/D/E/F=1-1049"/>
</dbReference>
<dbReference type="PDB" id="4ZIV">
    <property type="method" value="X-ray"/>
    <property type="resolution" value="3.16 A"/>
    <property type="chains" value="A/B/C/D/E/F=1-1049"/>
</dbReference>
<dbReference type="PDB" id="4ZIW">
    <property type="method" value="X-ray"/>
    <property type="resolution" value="3.40 A"/>
    <property type="chains" value="A/B/C/D/E/F=1-1049"/>
</dbReference>
<dbReference type="PDB" id="4ZJL">
    <property type="method" value="X-ray"/>
    <property type="resolution" value="3.47 A"/>
    <property type="chains" value="A/B/C/D/E/F=1-1049"/>
</dbReference>
<dbReference type="PDB" id="4ZJO">
    <property type="method" value="X-ray"/>
    <property type="resolution" value="3.60 A"/>
    <property type="chains" value="A/B/C/D/E/F=1-1049"/>
</dbReference>
<dbReference type="PDB" id="4ZJQ">
    <property type="method" value="X-ray"/>
    <property type="resolution" value="3.59 A"/>
    <property type="chains" value="A/B/C/D/E/F=1-1049"/>
</dbReference>
<dbReference type="PDB" id="4ZLJ">
    <property type="method" value="X-ray"/>
    <property type="resolution" value="3.26 A"/>
    <property type="chains" value="A=1-1049"/>
</dbReference>
<dbReference type="PDB" id="4ZLL">
    <property type="method" value="X-ray"/>
    <property type="resolution" value="3.36 A"/>
    <property type="chains" value="A=1-1049"/>
</dbReference>
<dbReference type="PDB" id="4ZLN">
    <property type="method" value="X-ray"/>
    <property type="resolution" value="3.56 A"/>
    <property type="chains" value="A=1-1049"/>
</dbReference>
<dbReference type="PDB" id="5EN5">
    <property type="method" value="X-ray"/>
    <property type="resolution" value="2.30 A"/>
    <property type="chains" value="A/B/C=39-329, A/B/C=561-869"/>
</dbReference>
<dbReference type="PDB" id="5ENO">
    <property type="method" value="X-ray"/>
    <property type="resolution" value="2.20 A"/>
    <property type="chains" value="A/B/C=39-329, A/B/C=561-869"/>
</dbReference>
<dbReference type="PDB" id="5ENP">
    <property type="method" value="X-ray"/>
    <property type="resolution" value="1.90 A"/>
    <property type="chains" value="A/B/C=39-329, A/B/C=561-869"/>
</dbReference>
<dbReference type="PDB" id="5ENQ">
    <property type="method" value="X-ray"/>
    <property type="resolution" value="1.80 A"/>
    <property type="chains" value="A/B/C=39-329, A/B/C=561-869"/>
</dbReference>
<dbReference type="PDB" id="5ENR">
    <property type="method" value="X-ray"/>
    <property type="resolution" value="2.30 A"/>
    <property type="chains" value="A/B/C=39-329, A/B/C=561-869"/>
</dbReference>
<dbReference type="PDB" id="5ENS">
    <property type="method" value="X-ray"/>
    <property type="resolution" value="2.80 A"/>
    <property type="chains" value="A/B/C=39-329, A/B/C=561-869"/>
</dbReference>
<dbReference type="PDB" id="5ENT">
    <property type="method" value="X-ray"/>
    <property type="resolution" value="2.50 A"/>
    <property type="chains" value="A/B/C=39-329, A/B/C=561-869"/>
</dbReference>
<dbReference type="PDB" id="5JMN">
    <property type="method" value="X-ray"/>
    <property type="resolution" value="2.50 A"/>
    <property type="chains" value="A/B/C=1-1049"/>
</dbReference>
<dbReference type="PDB" id="5NC5">
    <property type="method" value="X-ray"/>
    <property type="resolution" value="3.20 A"/>
    <property type="chains" value="A/B/C=1-1049"/>
</dbReference>
<dbReference type="PDB" id="5NG5">
    <property type="method" value="EM"/>
    <property type="resolution" value="6.50 A"/>
    <property type="chains" value="J/K/L=1-1049"/>
</dbReference>
<dbReference type="PDB" id="5O66">
    <property type="method" value="EM"/>
    <property type="resolution" value="5.90 A"/>
    <property type="chains" value="J/K/L=1-1049"/>
</dbReference>
<dbReference type="PDB" id="5V5S">
    <property type="method" value="EM"/>
    <property type="resolution" value="6.50 A"/>
    <property type="chains" value="J/K/L=1-1049"/>
</dbReference>
<dbReference type="PDB" id="5YIL">
    <property type="method" value="X-ray"/>
    <property type="resolution" value="3.00 A"/>
    <property type="chains" value="A/B/C=1-1049"/>
</dbReference>
<dbReference type="PDB" id="6BAJ">
    <property type="method" value="EM"/>
    <property type="resolution" value="3.20 A"/>
    <property type="chains" value="A/B/C=1-1049"/>
</dbReference>
<dbReference type="PDB" id="6CSX">
    <property type="method" value="EM"/>
    <property type="resolution" value="3.00 A"/>
    <property type="chains" value="A/B/C=1-1049"/>
</dbReference>
<dbReference type="PDB" id="6Q4N">
    <property type="method" value="X-ray"/>
    <property type="resolution" value="2.80 A"/>
    <property type="chains" value="A/B/C=1-1049"/>
</dbReference>
<dbReference type="PDB" id="6Q4O">
    <property type="method" value="X-ray"/>
    <property type="resolution" value="2.80 A"/>
    <property type="chains" value="A/B/C=1-1049"/>
</dbReference>
<dbReference type="PDB" id="6Q4P">
    <property type="method" value="X-ray"/>
    <property type="resolution" value="2.80 A"/>
    <property type="chains" value="A/B/C=1-1049"/>
</dbReference>
<dbReference type="PDB" id="6SGR">
    <property type="method" value="EM"/>
    <property type="resolution" value="3.17 A"/>
    <property type="chains" value="A/B/C=1-1049"/>
</dbReference>
<dbReference type="PDB" id="6SGS">
    <property type="method" value="EM"/>
    <property type="resolution" value="3.20 A"/>
    <property type="chains" value="A/B/C=1-1049"/>
</dbReference>
<dbReference type="PDB" id="6SGT">
    <property type="method" value="EM"/>
    <property type="resolution" value="3.46 A"/>
    <property type="chains" value="A/B/C=1-1049"/>
</dbReference>
<dbReference type="PDB" id="6SGU">
    <property type="method" value="EM"/>
    <property type="resolution" value="3.27 A"/>
    <property type="chains" value="A/B/C=1-1049"/>
</dbReference>
<dbReference type="PDB" id="6ZO5">
    <property type="method" value="X-ray"/>
    <property type="resolution" value="2.50 A"/>
    <property type="chains" value="A/B/C=1-1049"/>
</dbReference>
<dbReference type="PDB" id="6ZO6">
    <property type="method" value="X-ray"/>
    <property type="resolution" value="2.35 A"/>
    <property type="chains" value="A/B/C=1-1049"/>
</dbReference>
<dbReference type="PDB" id="6ZO7">
    <property type="method" value="X-ray"/>
    <property type="resolution" value="2.85 A"/>
    <property type="chains" value="A/B/C=1-1049"/>
</dbReference>
<dbReference type="PDB" id="6ZO8">
    <property type="method" value="X-ray"/>
    <property type="resolution" value="2.50 A"/>
    <property type="chains" value="A/B/C=1-1049"/>
</dbReference>
<dbReference type="PDB" id="6ZO9">
    <property type="method" value="X-ray"/>
    <property type="resolution" value="2.70 A"/>
    <property type="chains" value="A/B/C=1-1049"/>
</dbReference>
<dbReference type="PDB" id="6ZOA">
    <property type="method" value="X-ray"/>
    <property type="resolution" value="3.05 A"/>
    <property type="chains" value="A/B/C=1-1049"/>
</dbReference>
<dbReference type="PDB" id="6ZOB">
    <property type="method" value="X-ray"/>
    <property type="resolution" value="2.80 A"/>
    <property type="chains" value="A/B/C=1-1049"/>
</dbReference>
<dbReference type="PDB" id="6ZOC">
    <property type="method" value="X-ray"/>
    <property type="resolution" value="2.89 A"/>
    <property type="chains" value="A/B/C=1-1049"/>
</dbReference>
<dbReference type="PDB" id="6ZOD">
    <property type="method" value="X-ray"/>
    <property type="resolution" value="2.85 A"/>
    <property type="chains" value="A/B/C=1-1049"/>
</dbReference>
<dbReference type="PDB" id="6ZOE">
    <property type="method" value="X-ray"/>
    <property type="resolution" value="2.85 A"/>
    <property type="chains" value="A=1-1049"/>
</dbReference>
<dbReference type="PDB" id="6ZOF">
    <property type="method" value="X-ray"/>
    <property type="resolution" value="3.30 A"/>
    <property type="chains" value="A/B/C=1-1049"/>
</dbReference>
<dbReference type="PDB" id="6ZOG">
    <property type="method" value="X-ray"/>
    <property type="resolution" value="2.75 A"/>
    <property type="chains" value="A/B/C=1-1049"/>
</dbReference>
<dbReference type="PDB" id="6ZOH">
    <property type="method" value="X-ray"/>
    <property type="resolution" value="2.80 A"/>
    <property type="chains" value="A/B/C=1-1049"/>
</dbReference>
<dbReference type="PDB" id="7B5P">
    <property type="method" value="EM"/>
    <property type="resolution" value="3.20 A"/>
    <property type="chains" value="A/B/C=2-1049"/>
</dbReference>
<dbReference type="PDB" id="7B8R">
    <property type="method" value="X-ray"/>
    <property type="resolution" value="2.10 A"/>
    <property type="chains" value="A/B/C=39-329, A/B/C=561-869"/>
</dbReference>
<dbReference type="PDB" id="7B8S">
    <property type="method" value="X-ray"/>
    <property type="resolution" value="2.30 A"/>
    <property type="chains" value="A/B/C=39-329, A/B/C=561-869"/>
</dbReference>
<dbReference type="PDB" id="7B8T">
    <property type="method" value="X-ray"/>
    <property type="resolution" value="2.70 A"/>
    <property type="chains" value="A/B/C=39-329, A/B/C=561-869"/>
</dbReference>
<dbReference type="PDB" id="7O3L">
    <property type="method" value="X-ray"/>
    <property type="resolution" value="3.53 A"/>
    <property type="chains" value="A/B/C/D/E/F=1-1049"/>
</dbReference>
<dbReference type="PDB" id="7O3M">
    <property type="method" value="X-ray"/>
    <property type="resolution" value="3.55 A"/>
    <property type="chains" value="A/B/C/D/E/F=1-1049"/>
</dbReference>
<dbReference type="PDB" id="7O3N">
    <property type="method" value="X-ray"/>
    <property type="resolution" value="3.56 A"/>
    <property type="chains" value="A/B/C/D/E/F=1-1049"/>
</dbReference>
<dbReference type="PDB" id="7OUK">
    <property type="method" value="X-ray"/>
    <property type="resolution" value="2.60 A"/>
    <property type="chains" value="A/B/C=1-1049"/>
</dbReference>
<dbReference type="PDB" id="7OUL">
    <property type="method" value="X-ray"/>
    <property type="resolution" value="2.80 A"/>
    <property type="chains" value="A/B/C=1-1049"/>
</dbReference>
<dbReference type="PDB" id="7OUM">
    <property type="method" value="X-ray"/>
    <property type="resolution" value="2.45 A"/>
    <property type="chains" value="A/B/C=1-1049"/>
</dbReference>
<dbReference type="PDB" id="7RR6">
    <property type="method" value="EM"/>
    <property type="resolution" value="3.10 A"/>
    <property type="chains" value="A/B/C=1-1049"/>
</dbReference>
<dbReference type="PDB" id="7RR7">
    <property type="method" value="EM"/>
    <property type="resolution" value="3.05 A"/>
    <property type="chains" value="A/B/C=1-1049"/>
</dbReference>
<dbReference type="PDB" id="7RR8">
    <property type="method" value="EM"/>
    <property type="resolution" value="3.51 A"/>
    <property type="chains" value="A/B/C=1-1049"/>
</dbReference>
<dbReference type="PDB" id="8PX7">
    <property type="method" value="X-ray"/>
    <property type="resolution" value="3.40 A"/>
    <property type="chains" value="A=1-1049"/>
</dbReference>
<dbReference type="PDB" id="8QZQ">
    <property type="method" value="EM"/>
    <property type="resolution" value="3.23 A"/>
    <property type="chains" value="A/B/C=1-1049"/>
</dbReference>
<dbReference type="PDB" id="8QZT">
    <property type="method" value="EM"/>
    <property type="resolution" value="3.52 A"/>
    <property type="chains" value="A/B/C=1-1049"/>
</dbReference>
<dbReference type="PDB" id="9BFH">
    <property type="method" value="EM"/>
    <property type="resolution" value="2.62 A"/>
    <property type="chains" value="A/B/C=1-1049"/>
</dbReference>
<dbReference type="PDB" id="9BFM">
    <property type="method" value="EM"/>
    <property type="resolution" value="2.71 A"/>
    <property type="chains" value="A/B/C=1-1049"/>
</dbReference>
<dbReference type="PDB" id="9BFN">
    <property type="method" value="EM"/>
    <property type="resolution" value="2.71 A"/>
    <property type="chains" value="A/B/C=1-1049"/>
</dbReference>
<dbReference type="PDB" id="9BFT">
    <property type="method" value="EM"/>
    <property type="resolution" value="2.44 A"/>
    <property type="chains" value="A/B/C=1-1049"/>
</dbReference>
<dbReference type="PDBsum" id="1IWG"/>
<dbReference type="PDBsum" id="1OY6"/>
<dbReference type="PDBsum" id="1OY8"/>
<dbReference type="PDBsum" id="1OY9"/>
<dbReference type="PDBsum" id="1OYD"/>
<dbReference type="PDBsum" id="1OYE"/>
<dbReference type="PDBsum" id="1T9T"/>
<dbReference type="PDBsum" id="1T9U"/>
<dbReference type="PDBsum" id="1T9V"/>
<dbReference type="PDBsum" id="1T9W"/>
<dbReference type="PDBsum" id="1T9X"/>
<dbReference type="PDBsum" id="1T9Y"/>
<dbReference type="PDBsum" id="2DHH"/>
<dbReference type="PDBsum" id="2DR6"/>
<dbReference type="PDBsum" id="2DRD"/>
<dbReference type="PDBsum" id="2GIF"/>
<dbReference type="PDBsum" id="2HQC"/>
<dbReference type="PDBsum" id="2HQD"/>
<dbReference type="PDBsum" id="2HQF"/>
<dbReference type="PDBsum" id="2HQG"/>
<dbReference type="PDBsum" id="2HRT"/>
<dbReference type="PDBsum" id="2I6W"/>
<dbReference type="PDBsum" id="2J8S"/>
<dbReference type="PDBsum" id="2RDD"/>
<dbReference type="PDBsum" id="2W1B"/>
<dbReference type="PDBsum" id="3AOA"/>
<dbReference type="PDBsum" id="3AOB"/>
<dbReference type="PDBsum" id="3AOC"/>
<dbReference type="PDBsum" id="3AOD"/>
<dbReference type="PDBsum" id="3D9B"/>
<dbReference type="PDBsum" id="3NOC"/>
<dbReference type="PDBsum" id="3NOG"/>
<dbReference type="PDBsum" id="3W9H"/>
<dbReference type="PDBsum" id="4C48"/>
<dbReference type="PDBsum" id="4CDI"/>
<dbReference type="PDBsum" id="4DX5"/>
<dbReference type="PDBsum" id="4DX6"/>
<dbReference type="PDBsum" id="4DX7"/>
<dbReference type="PDBsum" id="4K7Q"/>
<dbReference type="PDBsum" id="4U8V"/>
<dbReference type="PDBsum" id="4U8Y"/>
<dbReference type="PDBsum" id="4U95"/>
<dbReference type="PDBsum" id="4U96"/>
<dbReference type="PDBsum" id="4ZIT"/>
<dbReference type="PDBsum" id="4ZIV"/>
<dbReference type="PDBsum" id="4ZIW"/>
<dbReference type="PDBsum" id="4ZJL"/>
<dbReference type="PDBsum" id="4ZJO"/>
<dbReference type="PDBsum" id="4ZJQ"/>
<dbReference type="PDBsum" id="4ZLJ"/>
<dbReference type="PDBsum" id="4ZLL"/>
<dbReference type="PDBsum" id="4ZLN"/>
<dbReference type="PDBsum" id="5EN5"/>
<dbReference type="PDBsum" id="5ENO"/>
<dbReference type="PDBsum" id="5ENP"/>
<dbReference type="PDBsum" id="5ENQ"/>
<dbReference type="PDBsum" id="5ENR"/>
<dbReference type="PDBsum" id="5ENS"/>
<dbReference type="PDBsum" id="5ENT"/>
<dbReference type="PDBsum" id="5JMN"/>
<dbReference type="PDBsum" id="5NC5"/>
<dbReference type="PDBsum" id="5NG5"/>
<dbReference type="PDBsum" id="5O66"/>
<dbReference type="PDBsum" id="5V5S"/>
<dbReference type="PDBsum" id="5YIL"/>
<dbReference type="PDBsum" id="6BAJ"/>
<dbReference type="PDBsum" id="6CSX"/>
<dbReference type="PDBsum" id="6Q4N"/>
<dbReference type="PDBsum" id="6Q4O"/>
<dbReference type="PDBsum" id="6Q4P"/>
<dbReference type="PDBsum" id="6SGR"/>
<dbReference type="PDBsum" id="6SGS"/>
<dbReference type="PDBsum" id="6SGT"/>
<dbReference type="PDBsum" id="6SGU"/>
<dbReference type="PDBsum" id="6ZO5"/>
<dbReference type="PDBsum" id="6ZO6"/>
<dbReference type="PDBsum" id="6ZO7"/>
<dbReference type="PDBsum" id="6ZO8"/>
<dbReference type="PDBsum" id="6ZO9"/>
<dbReference type="PDBsum" id="6ZOA"/>
<dbReference type="PDBsum" id="6ZOB"/>
<dbReference type="PDBsum" id="6ZOC"/>
<dbReference type="PDBsum" id="6ZOD"/>
<dbReference type="PDBsum" id="6ZOE"/>
<dbReference type="PDBsum" id="6ZOF"/>
<dbReference type="PDBsum" id="6ZOG"/>
<dbReference type="PDBsum" id="6ZOH"/>
<dbReference type="PDBsum" id="7B5P"/>
<dbReference type="PDBsum" id="7B8R"/>
<dbReference type="PDBsum" id="7B8S"/>
<dbReference type="PDBsum" id="7B8T"/>
<dbReference type="PDBsum" id="7O3L"/>
<dbReference type="PDBsum" id="7O3M"/>
<dbReference type="PDBsum" id="7O3N"/>
<dbReference type="PDBsum" id="7OUK"/>
<dbReference type="PDBsum" id="7OUL"/>
<dbReference type="PDBsum" id="7OUM"/>
<dbReference type="PDBsum" id="7RR6"/>
<dbReference type="PDBsum" id="7RR7"/>
<dbReference type="PDBsum" id="7RR8"/>
<dbReference type="PDBsum" id="8PX7"/>
<dbReference type="PDBsum" id="8QZQ"/>
<dbReference type="PDBsum" id="8QZT"/>
<dbReference type="PDBsum" id="9BFH"/>
<dbReference type="PDBsum" id="9BFM"/>
<dbReference type="PDBsum" id="9BFN"/>
<dbReference type="PDBsum" id="9BFT"/>
<dbReference type="EMDB" id="EMD-10182"/>
<dbReference type="EMDB" id="EMD-10183"/>
<dbReference type="EMDB" id="EMD-10184"/>
<dbReference type="EMDB" id="EMD-10185"/>
<dbReference type="EMDB" id="EMD-18780"/>
<dbReference type="EMDB" id="EMD-18782"/>
<dbReference type="EMDB" id="EMD-24653"/>
<dbReference type="EMDB" id="EMD-24654"/>
<dbReference type="EMDB" id="EMD-24655"/>
<dbReference type="EMDB" id="EMD-25400"/>
<dbReference type="EMDB" id="EMD-2714"/>
<dbReference type="EMDB" id="EMD-3636"/>
<dbReference type="EMDB" id="EMD-44496"/>
<dbReference type="EMDB" id="EMD-44500"/>
<dbReference type="EMDB" id="EMD-44501"/>
<dbReference type="EMDB" id="EMD-44506"/>
<dbReference type="EMDB" id="EMD-7074"/>
<dbReference type="EMDB" id="EMD-7609"/>
<dbReference type="EMDB" id="EMD-8636"/>
<dbReference type="EMDB" id="EMD-8640"/>
<dbReference type="PCDDB" id="P31224"/>
<dbReference type="SMR" id="P31224"/>
<dbReference type="BioGRID" id="4259859">
    <property type="interactions" value="390"/>
</dbReference>
<dbReference type="ComplexPortal" id="CPX-4263">
    <property type="entry name" value="AcrAB-TolC multidrug efflux transport complex"/>
</dbReference>
<dbReference type="DIP" id="DIP-9049N"/>
<dbReference type="FunCoup" id="P31224">
    <property type="interactions" value="569"/>
</dbReference>
<dbReference type="IntAct" id="P31224">
    <property type="interactions" value="9"/>
</dbReference>
<dbReference type="MINT" id="P31224"/>
<dbReference type="STRING" id="511145.b0462"/>
<dbReference type="ChEMBL" id="CHEMBL1681614"/>
<dbReference type="DrugBank" id="DB03619">
    <property type="generic name" value="Deoxycholic acid"/>
</dbReference>
<dbReference type="DrugBank" id="DB04209">
    <property type="generic name" value="Dequalinium"/>
</dbReference>
<dbReference type="DrugBank" id="DB03825">
    <property type="generic name" value="Rhodamine 6G"/>
</dbReference>
<dbReference type="CARD" id="ARO:3000216">
    <property type="molecule name" value="acrB"/>
    <property type="mechanism identifier" value="ARO:0010000"/>
    <property type="mechanism name" value="antibiotic efflux"/>
</dbReference>
<dbReference type="TCDB" id="2.A.6.2.2">
    <property type="family name" value="the resistance-nodulation-cell division (rnd) superfamily"/>
</dbReference>
<dbReference type="jPOST" id="P31224"/>
<dbReference type="PaxDb" id="511145-b0462"/>
<dbReference type="ABCD" id="P31224">
    <property type="antibodies" value="1 sequenced antibody"/>
</dbReference>
<dbReference type="EnsemblBacteria" id="AAC73564">
    <property type="protein sequence ID" value="AAC73564"/>
    <property type="gene ID" value="b0462"/>
</dbReference>
<dbReference type="GeneID" id="75202887"/>
<dbReference type="GeneID" id="945108"/>
<dbReference type="KEGG" id="ecj:JW0451"/>
<dbReference type="KEGG" id="eco:b0462"/>
<dbReference type="KEGG" id="ecoc:C3026_02265"/>
<dbReference type="PATRIC" id="fig|1411691.4.peg.1814"/>
<dbReference type="EchoBASE" id="EB1655"/>
<dbReference type="eggNOG" id="COG0841">
    <property type="taxonomic scope" value="Bacteria"/>
</dbReference>
<dbReference type="HOGENOM" id="CLU_002755_0_0_6"/>
<dbReference type="InParanoid" id="P31224"/>
<dbReference type="OMA" id="GVFYEQF"/>
<dbReference type="OrthoDB" id="9757904at2"/>
<dbReference type="PhylomeDB" id="P31224"/>
<dbReference type="BioCyc" id="EcoCyc:ACRB-MONOMER"/>
<dbReference type="BioCyc" id="MetaCyc:ACRB-MONOMER"/>
<dbReference type="EvolutionaryTrace" id="P31224"/>
<dbReference type="PRO" id="PR:P31224"/>
<dbReference type="Proteomes" id="UP000000625">
    <property type="component" value="Chromosome"/>
</dbReference>
<dbReference type="GO" id="GO:1990281">
    <property type="term" value="C:efflux pump complex"/>
    <property type="evidence" value="ECO:0000314"/>
    <property type="project" value="EcoCyc"/>
</dbReference>
<dbReference type="GO" id="GO:0016020">
    <property type="term" value="C:membrane"/>
    <property type="evidence" value="ECO:0007005"/>
    <property type="project" value="UniProtKB"/>
</dbReference>
<dbReference type="GO" id="GO:0098567">
    <property type="term" value="C:periplasmic side of plasma membrane"/>
    <property type="evidence" value="ECO:0000303"/>
    <property type="project" value="ComplexPortal"/>
</dbReference>
<dbReference type="GO" id="GO:0005886">
    <property type="term" value="C:plasma membrane"/>
    <property type="evidence" value="ECO:0000314"/>
    <property type="project" value="EcoCyc"/>
</dbReference>
<dbReference type="GO" id="GO:0015567">
    <property type="term" value="F:alkane transmembrane transporter activity"/>
    <property type="evidence" value="ECO:0000316"/>
    <property type="project" value="EcoCyc"/>
</dbReference>
<dbReference type="GO" id="GO:0015125">
    <property type="term" value="F:bile acid transmembrane transporter activity"/>
    <property type="evidence" value="ECO:0000316"/>
    <property type="project" value="EcoCyc"/>
</dbReference>
<dbReference type="GO" id="GO:0015562">
    <property type="term" value="F:efflux transmembrane transporter activity"/>
    <property type="evidence" value="ECO:0007669"/>
    <property type="project" value="InterPro"/>
</dbReference>
<dbReference type="GO" id="GO:0042931">
    <property type="term" value="F:enterobactin transmembrane transporter activity"/>
    <property type="evidence" value="ECO:0000269"/>
    <property type="project" value="EcoCyc"/>
</dbReference>
<dbReference type="GO" id="GO:0042802">
    <property type="term" value="F:identical protein binding"/>
    <property type="evidence" value="ECO:0000353"/>
    <property type="project" value="IntAct"/>
</dbReference>
<dbReference type="GO" id="GO:0042910">
    <property type="term" value="F:xenobiotic transmembrane transporter activity"/>
    <property type="evidence" value="ECO:0000315"/>
    <property type="project" value="EcoliWiki"/>
</dbReference>
<dbReference type="GO" id="GO:0015895">
    <property type="term" value="P:alkane transport"/>
    <property type="evidence" value="ECO:0000316"/>
    <property type="project" value="EcoCyc"/>
</dbReference>
<dbReference type="GO" id="GO:0015721">
    <property type="term" value="P:bile acid and bile salt transport"/>
    <property type="evidence" value="ECO:0000316"/>
    <property type="project" value="EcoCyc"/>
</dbReference>
<dbReference type="GO" id="GO:0042930">
    <property type="term" value="P:enterobactin transport"/>
    <property type="evidence" value="ECO:0000269"/>
    <property type="project" value="EcoCyc"/>
</dbReference>
<dbReference type="GO" id="GO:0015908">
    <property type="term" value="P:fatty acid transport"/>
    <property type="evidence" value="ECO:0000316"/>
    <property type="project" value="EcoCyc"/>
</dbReference>
<dbReference type="GO" id="GO:0046677">
    <property type="term" value="P:response to antibiotic"/>
    <property type="evidence" value="ECO:0000316"/>
    <property type="project" value="EcoCyc"/>
</dbReference>
<dbReference type="GO" id="GO:0009636">
    <property type="term" value="P:response to toxic substance"/>
    <property type="evidence" value="ECO:0000316"/>
    <property type="project" value="EcoCyc"/>
</dbReference>
<dbReference type="GO" id="GO:0009410">
    <property type="term" value="P:response to xenobiotic stimulus"/>
    <property type="evidence" value="ECO:0000316"/>
    <property type="project" value="EcoCyc"/>
</dbReference>
<dbReference type="GO" id="GO:0140330">
    <property type="term" value="P:xenobiotic detoxification by transmembrane export across the cell outer membrane"/>
    <property type="evidence" value="ECO:0000314"/>
    <property type="project" value="ComplexPortal"/>
</dbReference>
<dbReference type="GO" id="GO:0042908">
    <property type="term" value="P:xenobiotic transport"/>
    <property type="evidence" value="ECO:0000316"/>
    <property type="project" value="EcoCyc"/>
</dbReference>
<dbReference type="FunFam" id="1.20.1640.10:FF:000001">
    <property type="entry name" value="Efflux pump membrane transporter"/>
    <property type="match status" value="1"/>
</dbReference>
<dbReference type="FunFam" id="1.20.1640.10:FF:000002">
    <property type="entry name" value="Efflux pump membrane transporter"/>
    <property type="match status" value="1"/>
</dbReference>
<dbReference type="FunFam" id="3.30.2090.10:FF:000001">
    <property type="entry name" value="Efflux pump membrane transporter"/>
    <property type="match status" value="1"/>
</dbReference>
<dbReference type="FunFam" id="3.30.2090.10:FF:000002">
    <property type="entry name" value="Efflux pump membrane transporter"/>
    <property type="match status" value="1"/>
</dbReference>
<dbReference type="FunFam" id="3.30.70.1430:FF:000001">
    <property type="entry name" value="Efflux pump membrane transporter"/>
    <property type="match status" value="1"/>
</dbReference>
<dbReference type="FunFam" id="3.30.70.1430:FF:000002">
    <property type="entry name" value="Efflux pump membrane transporter"/>
    <property type="match status" value="1"/>
</dbReference>
<dbReference type="Gene3D" id="3.30.70.1430">
    <property type="entry name" value="Multidrug efflux transporter AcrB pore domain"/>
    <property type="match status" value="2"/>
</dbReference>
<dbReference type="Gene3D" id="3.30.70.1440">
    <property type="entry name" value="Multidrug efflux transporter AcrB pore domain"/>
    <property type="match status" value="1"/>
</dbReference>
<dbReference type="Gene3D" id="3.30.70.1320">
    <property type="entry name" value="Multidrug efflux transporter AcrB pore domain like"/>
    <property type="match status" value="1"/>
</dbReference>
<dbReference type="Gene3D" id="3.30.2090.10">
    <property type="entry name" value="Multidrug efflux transporter AcrB TolC docking domain, DN and DC subdomains"/>
    <property type="match status" value="2"/>
</dbReference>
<dbReference type="Gene3D" id="1.20.1640.10">
    <property type="entry name" value="Multidrug efflux transporter AcrB transmembrane domain"/>
    <property type="match status" value="2"/>
</dbReference>
<dbReference type="InterPro" id="IPR027463">
    <property type="entry name" value="AcrB_DN_DC_subdom"/>
</dbReference>
<dbReference type="InterPro" id="IPR001036">
    <property type="entry name" value="Acrflvin-R"/>
</dbReference>
<dbReference type="InterPro" id="IPR004764">
    <property type="entry name" value="MdtF-like"/>
</dbReference>
<dbReference type="NCBIfam" id="TIGR00915">
    <property type="entry name" value="2A0602"/>
    <property type="match status" value="1"/>
</dbReference>
<dbReference type="NCBIfam" id="NF011706">
    <property type="entry name" value="PRK15127.1"/>
    <property type="match status" value="1"/>
</dbReference>
<dbReference type="NCBIfam" id="NF000282">
    <property type="entry name" value="RND_permease_1"/>
    <property type="match status" value="1"/>
</dbReference>
<dbReference type="PANTHER" id="PTHR32063">
    <property type="match status" value="1"/>
</dbReference>
<dbReference type="PANTHER" id="PTHR32063:SF13">
    <property type="entry name" value="MULTIDRUG EFFLUX PUMP SUBUNIT ACRB-RELATED"/>
    <property type="match status" value="1"/>
</dbReference>
<dbReference type="Pfam" id="PF00873">
    <property type="entry name" value="ACR_tran"/>
    <property type="match status" value="1"/>
</dbReference>
<dbReference type="PRINTS" id="PR00702">
    <property type="entry name" value="ACRIFLAVINRP"/>
</dbReference>
<dbReference type="SUPFAM" id="SSF82693">
    <property type="entry name" value="Multidrug efflux transporter AcrB pore domain, PN1, PN2, PC1 and PC2 subdomains"/>
    <property type="match status" value="3"/>
</dbReference>
<dbReference type="SUPFAM" id="SSF82714">
    <property type="entry name" value="Multidrug efflux transporter AcrB TolC docking domain, DN and DC subdomains"/>
    <property type="match status" value="2"/>
</dbReference>
<dbReference type="SUPFAM" id="SSF82866">
    <property type="entry name" value="Multidrug efflux transporter AcrB transmembrane domain"/>
    <property type="match status" value="2"/>
</dbReference>
<organism>
    <name type="scientific">Escherichia coli (strain K12)</name>
    <dbReference type="NCBI Taxonomy" id="83333"/>
    <lineage>
        <taxon>Bacteria</taxon>
        <taxon>Pseudomonadati</taxon>
        <taxon>Pseudomonadota</taxon>
        <taxon>Gammaproteobacteria</taxon>
        <taxon>Enterobacterales</taxon>
        <taxon>Enterobacteriaceae</taxon>
        <taxon>Escherichia</taxon>
    </lineage>
</organism>
<gene>
    <name type="primary">acrB</name>
    <name type="synonym">acrE</name>
    <name type="ordered locus">b0462</name>
    <name type="ordered locus">JW0451</name>
</gene>
<proteinExistence type="evidence at protein level"/>